<comment type="function">
    <text evidence="1">Hydrolyzes cytidine or uridine to ribose and cytosine or uracil, respectively.</text>
</comment>
<comment type="similarity">
    <text evidence="1">Belongs to the IUNH family. RihA subfamily.</text>
</comment>
<feature type="chain" id="PRO_0000206822" description="Pyrimidine-specific ribonucleoside hydrolase RihA">
    <location>
        <begin position="1"/>
        <end position="311"/>
    </location>
</feature>
<feature type="active site" evidence="1">
    <location>
        <position position="240"/>
    </location>
</feature>
<organism>
    <name type="scientific">Shigella flexneri</name>
    <dbReference type="NCBI Taxonomy" id="623"/>
    <lineage>
        <taxon>Bacteria</taxon>
        <taxon>Pseudomonadati</taxon>
        <taxon>Pseudomonadota</taxon>
        <taxon>Gammaproteobacteria</taxon>
        <taxon>Enterobacterales</taxon>
        <taxon>Enterobacteriaceae</taxon>
        <taxon>Shigella</taxon>
    </lineage>
</organism>
<accession>Q83LY1</accession>
<accession>Q7UDD4</accession>
<proteinExistence type="inferred from homology"/>
<gene>
    <name evidence="1" type="primary">rihA</name>
    <name type="ordered locus">SF0630</name>
    <name type="ordered locus">S0652</name>
</gene>
<evidence type="ECO:0000255" key="1">
    <source>
        <dbReference type="HAMAP-Rule" id="MF_01431"/>
    </source>
</evidence>
<protein>
    <recommendedName>
        <fullName evidence="1">Pyrimidine-specific ribonucleoside hydrolase RihA</fullName>
        <ecNumber evidence="1">3.2.-.-</ecNumber>
    </recommendedName>
    <alternativeName>
        <fullName evidence="1">Cytidine/uridine-specific hydrolase</fullName>
    </alternativeName>
</protein>
<keyword id="KW-0326">Glycosidase</keyword>
<keyword id="KW-0378">Hydrolase</keyword>
<keyword id="KW-1185">Reference proteome</keyword>
<name>RIHA_SHIFL</name>
<dbReference type="EC" id="3.2.-.-" evidence="1"/>
<dbReference type="EMBL" id="AE005674">
    <property type="protein sequence ID" value="AAN42267.2"/>
    <property type="molecule type" value="Genomic_DNA"/>
</dbReference>
<dbReference type="EMBL" id="AE014073">
    <property type="protein sequence ID" value="AAP16138.1"/>
    <property type="molecule type" value="Genomic_DNA"/>
</dbReference>
<dbReference type="RefSeq" id="NP_706560.2">
    <property type="nucleotide sequence ID" value="NC_004337.2"/>
</dbReference>
<dbReference type="RefSeq" id="WP_001207526.1">
    <property type="nucleotide sequence ID" value="NZ_WPGW01000002.1"/>
</dbReference>
<dbReference type="SMR" id="Q83LY1"/>
<dbReference type="STRING" id="198214.SF0630"/>
<dbReference type="PaxDb" id="198214-SF0630"/>
<dbReference type="GeneID" id="1023592"/>
<dbReference type="KEGG" id="sfl:SF0630"/>
<dbReference type="KEGG" id="sfx:S0652"/>
<dbReference type="PATRIC" id="fig|198214.7.peg.736"/>
<dbReference type="HOGENOM" id="CLU_036838_2_0_6"/>
<dbReference type="Proteomes" id="UP000001006">
    <property type="component" value="Chromosome"/>
</dbReference>
<dbReference type="Proteomes" id="UP000002673">
    <property type="component" value="Chromosome"/>
</dbReference>
<dbReference type="GO" id="GO:0005829">
    <property type="term" value="C:cytosol"/>
    <property type="evidence" value="ECO:0007669"/>
    <property type="project" value="TreeGrafter"/>
</dbReference>
<dbReference type="GO" id="GO:0008477">
    <property type="term" value="F:purine nucleosidase activity"/>
    <property type="evidence" value="ECO:0007669"/>
    <property type="project" value="TreeGrafter"/>
</dbReference>
<dbReference type="GO" id="GO:0045437">
    <property type="term" value="F:uridine nucleosidase activity"/>
    <property type="evidence" value="ECO:0007669"/>
    <property type="project" value="InterPro"/>
</dbReference>
<dbReference type="GO" id="GO:0015949">
    <property type="term" value="P:nucleobase-containing small molecule interconversion"/>
    <property type="evidence" value="ECO:0007669"/>
    <property type="project" value="InterPro"/>
</dbReference>
<dbReference type="GO" id="GO:0006152">
    <property type="term" value="P:purine nucleoside catabolic process"/>
    <property type="evidence" value="ECO:0007669"/>
    <property type="project" value="TreeGrafter"/>
</dbReference>
<dbReference type="GO" id="GO:0006206">
    <property type="term" value="P:pyrimidine nucleobase metabolic process"/>
    <property type="evidence" value="ECO:0007669"/>
    <property type="project" value="UniProtKB-UniRule"/>
</dbReference>
<dbReference type="CDD" id="cd02651">
    <property type="entry name" value="nuc_hydro_IU_UC_XIUA"/>
    <property type="match status" value="1"/>
</dbReference>
<dbReference type="FunFam" id="3.90.245.10:FF:000001">
    <property type="entry name" value="Pyrimidine-specific ribonucleoside hydrolase RihA"/>
    <property type="match status" value="1"/>
</dbReference>
<dbReference type="Gene3D" id="3.90.245.10">
    <property type="entry name" value="Ribonucleoside hydrolase-like"/>
    <property type="match status" value="1"/>
</dbReference>
<dbReference type="HAMAP" id="MF_01431">
    <property type="entry name" value="Pyrim_hydro_RihA"/>
    <property type="match status" value="1"/>
</dbReference>
<dbReference type="InterPro" id="IPR015910">
    <property type="entry name" value="I/U_nuclsd_hydro_CS"/>
</dbReference>
<dbReference type="InterPro" id="IPR001910">
    <property type="entry name" value="Inosine/uridine_hydrolase_dom"/>
</dbReference>
<dbReference type="InterPro" id="IPR023186">
    <property type="entry name" value="IUNH"/>
</dbReference>
<dbReference type="InterPro" id="IPR022975">
    <property type="entry name" value="Pyrim_hydro_RihA"/>
</dbReference>
<dbReference type="InterPro" id="IPR036452">
    <property type="entry name" value="Ribo_hydro-like"/>
</dbReference>
<dbReference type="NCBIfam" id="NF007761">
    <property type="entry name" value="PRK10443.1"/>
    <property type="match status" value="1"/>
</dbReference>
<dbReference type="PANTHER" id="PTHR12304">
    <property type="entry name" value="INOSINE-URIDINE PREFERRING NUCLEOSIDE HYDROLASE"/>
    <property type="match status" value="1"/>
</dbReference>
<dbReference type="PANTHER" id="PTHR12304:SF4">
    <property type="entry name" value="URIDINE NUCLEOSIDASE"/>
    <property type="match status" value="1"/>
</dbReference>
<dbReference type="Pfam" id="PF01156">
    <property type="entry name" value="IU_nuc_hydro"/>
    <property type="match status" value="1"/>
</dbReference>
<dbReference type="SUPFAM" id="SSF53590">
    <property type="entry name" value="Nucleoside hydrolase"/>
    <property type="match status" value="1"/>
</dbReference>
<dbReference type="PROSITE" id="PS01247">
    <property type="entry name" value="IUNH"/>
    <property type="match status" value="1"/>
</dbReference>
<sequence length="311" mass="33819">MALPILLDCDPGHDDAIAIVLALASPELDVKAITSSAGNQTPEKTLRNVLRMLTLLNRTDIPVAGGAVKPLMRELIIADNVHGESGLDGPALPEPTFAPQNCTAVELMAKTLRESAEPVTIVSTGPQTNVALLLNSHPELHSKIARIVIMGGAMGLGNWTPAAEFNIYVDPEAAEIVFQSGIPVVMAGLDVTHKAQIHVEDTERFRAIGNPVSTIVAELLDFFLEYHKDEKWGFVGAPLHDPCTIAWLLKPELFTTVERWVGVETQGKYTQGMTVVDYYYLTGNKPNATVIVDVDRQGFVDLLADRLKFYA</sequence>
<reference key="1">
    <citation type="journal article" date="2002" name="Nucleic Acids Res.">
        <title>Genome sequence of Shigella flexneri 2a: insights into pathogenicity through comparison with genomes of Escherichia coli K12 and O157.</title>
        <authorList>
            <person name="Jin Q."/>
            <person name="Yuan Z."/>
            <person name="Xu J."/>
            <person name="Wang Y."/>
            <person name="Shen Y."/>
            <person name="Lu W."/>
            <person name="Wang J."/>
            <person name="Liu H."/>
            <person name="Yang J."/>
            <person name="Yang F."/>
            <person name="Zhang X."/>
            <person name="Zhang J."/>
            <person name="Yang G."/>
            <person name="Wu H."/>
            <person name="Qu D."/>
            <person name="Dong J."/>
            <person name="Sun L."/>
            <person name="Xue Y."/>
            <person name="Zhao A."/>
            <person name="Gao Y."/>
            <person name="Zhu J."/>
            <person name="Kan B."/>
            <person name="Ding K."/>
            <person name="Chen S."/>
            <person name="Cheng H."/>
            <person name="Yao Z."/>
            <person name="He B."/>
            <person name="Chen R."/>
            <person name="Ma D."/>
            <person name="Qiang B."/>
            <person name="Wen Y."/>
            <person name="Hou Y."/>
            <person name="Yu J."/>
        </authorList>
    </citation>
    <scope>NUCLEOTIDE SEQUENCE [LARGE SCALE GENOMIC DNA]</scope>
    <source>
        <strain>301 / Serotype 2a</strain>
    </source>
</reference>
<reference key="2">
    <citation type="journal article" date="2003" name="Infect. Immun.">
        <title>Complete genome sequence and comparative genomics of Shigella flexneri serotype 2a strain 2457T.</title>
        <authorList>
            <person name="Wei J."/>
            <person name="Goldberg M.B."/>
            <person name="Burland V."/>
            <person name="Venkatesan M.M."/>
            <person name="Deng W."/>
            <person name="Fournier G."/>
            <person name="Mayhew G.F."/>
            <person name="Plunkett G. III"/>
            <person name="Rose D.J."/>
            <person name="Darling A."/>
            <person name="Mau B."/>
            <person name="Perna N.T."/>
            <person name="Payne S.M."/>
            <person name="Runyen-Janecky L.J."/>
            <person name="Zhou S."/>
            <person name="Schwartz D.C."/>
            <person name="Blattner F.R."/>
        </authorList>
    </citation>
    <scope>NUCLEOTIDE SEQUENCE [LARGE SCALE GENOMIC DNA]</scope>
    <source>
        <strain>ATCC 700930 / 2457T / Serotype 2a</strain>
    </source>
</reference>